<reference key="1">
    <citation type="journal article" date="2000" name="Nucleic Acids Res.">
        <title>Complete genome sequence of the alkaliphilic bacterium Bacillus halodurans and genomic sequence comparison with Bacillus subtilis.</title>
        <authorList>
            <person name="Takami H."/>
            <person name="Nakasone K."/>
            <person name="Takaki Y."/>
            <person name="Maeno G."/>
            <person name="Sasaki R."/>
            <person name="Masui N."/>
            <person name="Fuji F."/>
            <person name="Hirama C."/>
            <person name="Nakamura Y."/>
            <person name="Ogasawara N."/>
            <person name="Kuhara S."/>
            <person name="Horikoshi K."/>
        </authorList>
    </citation>
    <scope>NUCLEOTIDE SEQUENCE [LARGE SCALE GENOMIC DNA]</scope>
    <source>
        <strain>ATCC BAA-125 / DSM 18197 / FERM 7344 / JCM 9153 / C-125</strain>
    </source>
</reference>
<reference key="2">
    <citation type="journal article" date="2007" name="Nat. Chem. Biol.">
        <title>A new thiamin salvage pathway.</title>
        <authorList>
            <person name="Jenkins A.H."/>
            <person name="Schyns G."/>
            <person name="Potot S."/>
            <person name="Sun G."/>
            <person name="Begley T.P."/>
        </authorList>
    </citation>
    <scope>FUNCTION</scope>
    <scope>PATHWAY</scope>
</reference>
<name>THIX_HALH5</name>
<proteinExistence type="inferred from homology"/>
<dbReference type="EMBL" id="BA000004">
    <property type="protein sequence ID" value="BAB06400.1"/>
    <property type="molecule type" value="Genomic_DNA"/>
</dbReference>
<dbReference type="PIR" id="A83985">
    <property type="entry name" value="A83985"/>
</dbReference>
<dbReference type="RefSeq" id="WP_010898830.1">
    <property type="nucleotide sequence ID" value="NC_002570.2"/>
</dbReference>
<dbReference type="SMR" id="Q9K9G6"/>
<dbReference type="STRING" id="272558.gene:10728579"/>
<dbReference type="KEGG" id="bha:BH2681"/>
<dbReference type="eggNOG" id="COG0600">
    <property type="taxonomic scope" value="Bacteria"/>
</dbReference>
<dbReference type="HOGENOM" id="CLU_046113_2_1_9"/>
<dbReference type="OrthoDB" id="9804353at2"/>
<dbReference type="UniPathway" id="UPA00060"/>
<dbReference type="Proteomes" id="UP000001258">
    <property type="component" value="Chromosome"/>
</dbReference>
<dbReference type="GO" id="GO:0005886">
    <property type="term" value="C:plasma membrane"/>
    <property type="evidence" value="ECO:0007669"/>
    <property type="project" value="UniProtKB-SubCell"/>
</dbReference>
<dbReference type="GO" id="GO:0009229">
    <property type="term" value="P:thiamine diphosphate biosynthetic process"/>
    <property type="evidence" value="ECO:0007669"/>
    <property type="project" value="UniProtKB-UniPathway"/>
</dbReference>
<dbReference type="GO" id="GO:0055085">
    <property type="term" value="P:transmembrane transport"/>
    <property type="evidence" value="ECO:0007669"/>
    <property type="project" value="InterPro"/>
</dbReference>
<dbReference type="CDD" id="cd06261">
    <property type="entry name" value="TM_PBP2"/>
    <property type="match status" value="1"/>
</dbReference>
<dbReference type="Gene3D" id="1.10.3720.10">
    <property type="entry name" value="MetI-like"/>
    <property type="match status" value="1"/>
</dbReference>
<dbReference type="InterPro" id="IPR000515">
    <property type="entry name" value="MetI-like"/>
</dbReference>
<dbReference type="InterPro" id="IPR035906">
    <property type="entry name" value="MetI-like_sf"/>
</dbReference>
<dbReference type="PANTHER" id="PTHR30151:SF20">
    <property type="entry name" value="ABC TRANSPORTER PERMEASE PROTEIN HI_0355-RELATED"/>
    <property type="match status" value="1"/>
</dbReference>
<dbReference type="PANTHER" id="PTHR30151">
    <property type="entry name" value="ALKANE SULFONATE ABC TRANSPORTER-RELATED, MEMBRANE SUBUNIT"/>
    <property type="match status" value="1"/>
</dbReference>
<dbReference type="Pfam" id="PF00528">
    <property type="entry name" value="BPD_transp_1"/>
    <property type="match status" value="1"/>
</dbReference>
<dbReference type="SUPFAM" id="SSF161098">
    <property type="entry name" value="MetI-like"/>
    <property type="match status" value="1"/>
</dbReference>
<dbReference type="PROSITE" id="PS50928">
    <property type="entry name" value="ABC_TM1"/>
    <property type="match status" value="1"/>
</dbReference>
<comment type="function">
    <text evidence="3 4">Participates in a thiamine pyrimidine salvage pathway as part of the ABC transporter complex ThiXYZ involved in the import of thiamine degradation products such as the formylaminopyrimidine N-formyl-4-amino-5-aminomethyl-2-methylpyrimidine (FAMP). Is probably responsible for the translocation of the substrate across the membrane.</text>
</comment>
<comment type="pathway">
    <text evidence="3">Cofactor biosynthesis; thiamine diphosphate biosynthesis.</text>
</comment>
<comment type="subunit">
    <text evidence="3 4">The complex is likely composed of an ATP-binding protein (ThiZ), a transmembrane protein (ThiX) and a solute-binding protein (ThiY).</text>
</comment>
<comment type="subcellular location">
    <subcellularLocation>
        <location evidence="1">Cell membrane</location>
        <topology evidence="1">Multi-pass membrane protein</topology>
    </subcellularLocation>
</comment>
<comment type="similarity">
    <text evidence="4">Belongs to the binding-protein-dependent transport system permease family.</text>
</comment>
<organism>
    <name type="scientific">Halalkalibacterium halodurans (strain ATCC BAA-125 / DSM 18197 / FERM 7344 / JCM 9153 / C-125)</name>
    <name type="common">Bacillus halodurans</name>
    <dbReference type="NCBI Taxonomy" id="272558"/>
    <lineage>
        <taxon>Bacteria</taxon>
        <taxon>Bacillati</taxon>
        <taxon>Bacillota</taxon>
        <taxon>Bacilli</taxon>
        <taxon>Bacillales</taxon>
        <taxon>Bacillaceae</taxon>
        <taxon>Halalkalibacterium (ex Joshi et al. 2022)</taxon>
    </lineage>
</organism>
<protein>
    <recommendedName>
        <fullName evidence="4">Formylaminopyrimidine transport permease protein ThiX</fullName>
        <shortName evidence="4">FAMP transport permease protein</shortName>
    </recommendedName>
</protein>
<sequence>MKRSYQALEPTLFFLMLMVIWEISARMIGQPYLLPSPIQIVMRTIDLSESLFFTHLPATLAIISIGLALSIVLGILLSLLMFWNERVERAVYPLLVASQTIPVIALAPIFVLWFGYSIWSKVAVTVLLTFFPITVNTYDGLKSTNRQYEELFYTMGATKRQLFYRLFVPSTLPSFLTGLRIAVPLAVIGAAVGEWLGANEGLGYFSRRMMTQFDGPGVFAPIFILSLLGILGFAAIKKLENILLPWRKKQ</sequence>
<accession>Q9K9G6</accession>
<feature type="chain" id="PRO_0000431516" description="Formylaminopyrimidine transport permease protein ThiX">
    <location>
        <begin position="1"/>
        <end position="250"/>
    </location>
</feature>
<feature type="transmembrane region" description="Helical; Name=1" evidence="1">
    <location>
        <begin position="5"/>
        <end position="25"/>
    </location>
</feature>
<feature type="transmembrane region" description="Helical; Name=2" evidence="1">
    <location>
        <begin position="62"/>
        <end position="82"/>
    </location>
</feature>
<feature type="transmembrane region" description="Helical; Name=3" evidence="1">
    <location>
        <begin position="94"/>
        <end position="114"/>
    </location>
</feature>
<feature type="transmembrane region" description="Helical; Name=4" evidence="1">
    <location>
        <begin position="115"/>
        <end position="135"/>
    </location>
</feature>
<feature type="transmembrane region" description="Helical; Name=5" evidence="1">
    <location>
        <begin position="172"/>
        <end position="192"/>
    </location>
</feature>
<feature type="transmembrane region" description="Helical; Name=6" evidence="1">
    <location>
        <begin position="216"/>
        <end position="236"/>
    </location>
</feature>
<feature type="domain" description="ABC transmembrane type-1" evidence="2">
    <location>
        <begin position="56"/>
        <end position="237"/>
    </location>
</feature>
<evidence type="ECO:0000255" key="1"/>
<evidence type="ECO:0000255" key="2">
    <source>
        <dbReference type="PROSITE-ProRule" id="PRU00441"/>
    </source>
</evidence>
<evidence type="ECO:0000303" key="3">
    <source>
    </source>
</evidence>
<evidence type="ECO:0000305" key="4"/>
<evidence type="ECO:0000312" key="5">
    <source>
        <dbReference type="EMBL" id="BAB06400.1"/>
    </source>
</evidence>
<gene>
    <name evidence="3" type="primary">thiX</name>
    <name evidence="5" type="ordered locus">BH2681</name>
</gene>
<keyword id="KW-1003">Cell membrane</keyword>
<keyword id="KW-0472">Membrane</keyword>
<keyword id="KW-1185">Reference proteome</keyword>
<keyword id="KW-0812">Transmembrane</keyword>
<keyword id="KW-1133">Transmembrane helix</keyword>
<keyword id="KW-0813">Transport</keyword>